<evidence type="ECO:0000250" key="1"/>
<evidence type="ECO:0000305" key="2"/>
<proteinExistence type="inferred from homology"/>
<name>AMPP3_TALMQ</name>
<sequence>MTSTDGILAGKYPAKAHARRVVEYLRQNGFQGDGVLYLEAQKTRMIEDNDSEQPFRQRRFFFYLSGCLLPDAHLTYHISTDKLTLFIPPLDPESVIWSGLPLSPAQAKELYDVDEVLYTTDVNPTLAHLASKVGFVFAIDGQISDDVSLKSFPDTDKVALKTAIEECRAVKDAYEVAMIRKANDVTSQAHVAVLKAAKSATNERELEAAFIGTCIAQGCREMAYHPIVASGTSSATLHYVNNDEPLIDSSTNKKKLNLLLDAAGEYKAYCADVTRTFPLSGKFSPESREIYDIVLEMQTESLAMLKEGVLWEDVHITAHRVAIKGLLKLGILRGSEEELLEKRVSVAFFPHGLGHYLGMDTHDTGGHANYADKDKMFQYLRVRGKLPAGSVITVEPGVYFCRFIIEPYLKDSELSKYIDADVLEKYWEVGGVRIEDNIHITKEGHENLTTAPKTADQVELMINGS</sequence>
<comment type="function">
    <text evidence="1">Catalyzes the removal of a penultimate prolyl residue from the N-termini of peptides.</text>
</comment>
<comment type="catalytic activity">
    <reaction>
        <text>Release of any N-terminal amino acid, including proline, that is linked to proline, even from a dipeptide or tripeptide.</text>
        <dbReference type="EC" id="3.4.11.9"/>
    </reaction>
</comment>
<comment type="cofactor">
    <cofactor evidence="1">
        <name>Mn(2+)</name>
        <dbReference type="ChEBI" id="CHEBI:29035"/>
    </cofactor>
    <text evidence="1">Binds 2 manganese ions per subunit.</text>
</comment>
<comment type="similarity">
    <text evidence="2">Belongs to the peptidase M24B family.</text>
</comment>
<protein>
    <recommendedName>
        <fullName>Probable Xaa-Pro aminopeptidase pepP</fullName>
        <ecNumber>3.4.11.9</ecNumber>
    </recommendedName>
    <alternativeName>
        <fullName>Aminoacylproline aminopeptidase</fullName>
    </alternativeName>
    <alternativeName>
        <fullName>Prolidase</fullName>
    </alternativeName>
</protein>
<keyword id="KW-0031">Aminopeptidase</keyword>
<keyword id="KW-0378">Hydrolase</keyword>
<keyword id="KW-0464">Manganese</keyword>
<keyword id="KW-0479">Metal-binding</keyword>
<keyword id="KW-0482">Metalloprotease</keyword>
<keyword id="KW-0645">Protease</keyword>
<keyword id="KW-1185">Reference proteome</keyword>
<accession>B6Q8T5</accession>
<reference key="1">
    <citation type="journal article" date="2015" name="Genome Announc.">
        <title>Genome sequence of the AIDS-associated pathogen Penicillium marneffei (ATCC18224) and its near taxonomic relative Talaromyces stipitatus (ATCC10500).</title>
        <authorList>
            <person name="Nierman W.C."/>
            <person name="Fedorova-Abrams N.D."/>
            <person name="Andrianopoulos A."/>
        </authorList>
    </citation>
    <scope>NUCLEOTIDE SEQUENCE [LARGE SCALE GENOMIC DNA]</scope>
    <source>
        <strain>ATCC 18224 / CBS 334.59 / QM 7333</strain>
    </source>
</reference>
<dbReference type="EC" id="3.4.11.9"/>
<dbReference type="EMBL" id="DS995900">
    <property type="protein sequence ID" value="EEA25889.1"/>
    <property type="molecule type" value="Genomic_DNA"/>
</dbReference>
<dbReference type="RefSeq" id="XP_002146436.1">
    <property type="nucleotide sequence ID" value="XM_002146400.1"/>
</dbReference>
<dbReference type="SMR" id="B6Q8T5"/>
<dbReference type="STRING" id="441960.B6Q8T5"/>
<dbReference type="VEuPathDB" id="FungiDB:PMAA_069810"/>
<dbReference type="HOGENOM" id="CLU_017266_1_2_1"/>
<dbReference type="OrthoDB" id="9306at28568"/>
<dbReference type="PhylomeDB" id="B6Q8T5"/>
<dbReference type="Proteomes" id="UP000001294">
    <property type="component" value="Unassembled WGS sequence"/>
</dbReference>
<dbReference type="GO" id="GO:0030145">
    <property type="term" value="F:manganese ion binding"/>
    <property type="evidence" value="ECO:0007669"/>
    <property type="project" value="InterPro"/>
</dbReference>
<dbReference type="GO" id="GO:0070006">
    <property type="term" value="F:metalloaminopeptidase activity"/>
    <property type="evidence" value="ECO:0007669"/>
    <property type="project" value="InterPro"/>
</dbReference>
<dbReference type="GO" id="GO:0006508">
    <property type="term" value="P:proteolysis"/>
    <property type="evidence" value="ECO:0007669"/>
    <property type="project" value="UniProtKB-KW"/>
</dbReference>
<dbReference type="CDD" id="cd01087">
    <property type="entry name" value="Prolidase"/>
    <property type="match status" value="1"/>
</dbReference>
<dbReference type="FunFam" id="3.90.230.10:FF:000002">
    <property type="entry name" value="Xaa-Pro aminopeptidase 3"/>
    <property type="match status" value="1"/>
</dbReference>
<dbReference type="Gene3D" id="3.90.230.10">
    <property type="entry name" value="Creatinase/methionine aminopeptidase superfamily"/>
    <property type="match status" value="1"/>
</dbReference>
<dbReference type="Gene3D" id="3.40.350.10">
    <property type="entry name" value="Creatinase/prolidase N-terminal domain"/>
    <property type="match status" value="1"/>
</dbReference>
<dbReference type="InterPro" id="IPR007865">
    <property type="entry name" value="Aminopep_P_N"/>
</dbReference>
<dbReference type="InterPro" id="IPR029149">
    <property type="entry name" value="Creatin/AminoP/Spt16_N"/>
</dbReference>
<dbReference type="InterPro" id="IPR036005">
    <property type="entry name" value="Creatinase/aminopeptidase-like"/>
</dbReference>
<dbReference type="InterPro" id="IPR000994">
    <property type="entry name" value="Pept_M24"/>
</dbReference>
<dbReference type="InterPro" id="IPR052433">
    <property type="entry name" value="X-Pro_dipept-like"/>
</dbReference>
<dbReference type="PANTHER" id="PTHR43226">
    <property type="entry name" value="XAA-PRO AMINOPEPTIDASE 3"/>
    <property type="match status" value="1"/>
</dbReference>
<dbReference type="PANTHER" id="PTHR43226:SF1">
    <property type="entry name" value="XAA-PRO DIPEPTIDASE"/>
    <property type="match status" value="1"/>
</dbReference>
<dbReference type="Pfam" id="PF05195">
    <property type="entry name" value="AMP_N"/>
    <property type="match status" value="1"/>
</dbReference>
<dbReference type="Pfam" id="PF00557">
    <property type="entry name" value="Peptidase_M24"/>
    <property type="match status" value="1"/>
</dbReference>
<dbReference type="SMART" id="SM01011">
    <property type="entry name" value="AMP_N"/>
    <property type="match status" value="1"/>
</dbReference>
<dbReference type="SUPFAM" id="SSF55920">
    <property type="entry name" value="Creatinase/aminopeptidase"/>
    <property type="match status" value="1"/>
</dbReference>
<dbReference type="SUPFAM" id="SSF53092">
    <property type="entry name" value="Creatinase/prolidase N-terminal domain"/>
    <property type="match status" value="1"/>
</dbReference>
<organism>
    <name type="scientific">Talaromyces marneffei (strain ATCC 18224 / CBS 334.59 / QM 7333)</name>
    <name type="common">Penicillium marneffei</name>
    <dbReference type="NCBI Taxonomy" id="441960"/>
    <lineage>
        <taxon>Eukaryota</taxon>
        <taxon>Fungi</taxon>
        <taxon>Dikarya</taxon>
        <taxon>Ascomycota</taxon>
        <taxon>Pezizomycotina</taxon>
        <taxon>Eurotiomycetes</taxon>
        <taxon>Eurotiomycetidae</taxon>
        <taxon>Eurotiales</taxon>
        <taxon>Trichocomaceae</taxon>
        <taxon>Talaromyces</taxon>
        <taxon>Talaromyces sect. Talaromyces</taxon>
    </lineage>
</organism>
<feature type="chain" id="PRO_0000411883" description="Probable Xaa-Pro aminopeptidase pepP">
    <location>
        <begin position="1"/>
        <end position="465"/>
    </location>
</feature>
<feature type="binding site" evidence="1">
    <location>
        <position position="261"/>
    </location>
    <ligand>
        <name>Mn(2+)</name>
        <dbReference type="ChEBI" id="CHEBI:29035"/>
        <label>2</label>
    </ligand>
</feature>
<feature type="binding site" evidence="1">
    <location>
        <position position="272"/>
    </location>
    <ligand>
        <name>Mn(2+)</name>
        <dbReference type="ChEBI" id="CHEBI:29035"/>
        <label>1</label>
    </ligand>
</feature>
<feature type="binding site" evidence="1">
    <location>
        <position position="272"/>
    </location>
    <ligand>
        <name>Mn(2+)</name>
        <dbReference type="ChEBI" id="CHEBI:29035"/>
        <label>2</label>
    </ligand>
</feature>
<feature type="binding site" evidence="1">
    <location>
        <position position="395"/>
    </location>
    <ligand>
        <name>Mn(2+)</name>
        <dbReference type="ChEBI" id="CHEBI:29035"/>
        <label>1</label>
    </ligand>
</feature>
<feature type="binding site" evidence="1">
    <location>
        <position position="435"/>
    </location>
    <ligand>
        <name>Mn(2+)</name>
        <dbReference type="ChEBI" id="CHEBI:29035"/>
        <label>1</label>
    </ligand>
</feature>
<feature type="binding site" evidence="1">
    <location>
        <position position="435"/>
    </location>
    <ligand>
        <name>Mn(2+)</name>
        <dbReference type="ChEBI" id="CHEBI:29035"/>
        <label>2</label>
    </ligand>
</feature>
<gene>
    <name type="primary">pepP</name>
    <name type="ORF">PMAA_069810</name>
</gene>